<reference key="1">
    <citation type="submission" date="2008-02" db="EMBL/GenBank/DDBJ databases">
        <title>Complete sequence of Pseudomonas putida W619.</title>
        <authorList>
            <person name="Copeland A."/>
            <person name="Lucas S."/>
            <person name="Lapidus A."/>
            <person name="Barry K."/>
            <person name="Detter J.C."/>
            <person name="Glavina del Rio T."/>
            <person name="Dalin E."/>
            <person name="Tice H."/>
            <person name="Pitluck S."/>
            <person name="Chain P."/>
            <person name="Malfatti S."/>
            <person name="Shin M."/>
            <person name="Vergez L."/>
            <person name="Schmutz J."/>
            <person name="Larimer F."/>
            <person name="Land M."/>
            <person name="Hauser L."/>
            <person name="Kyrpides N."/>
            <person name="Kim E."/>
            <person name="Taghavi S."/>
            <person name="Vangronsveld D."/>
            <person name="van der Lelie D."/>
            <person name="Richardson P."/>
        </authorList>
    </citation>
    <scope>NUCLEOTIDE SEQUENCE [LARGE SCALE GENOMIC DNA]</scope>
    <source>
        <strain>W619</strain>
    </source>
</reference>
<dbReference type="EMBL" id="CP000949">
    <property type="protein sequence ID" value="ACA74083.1"/>
    <property type="molecule type" value="Genomic_DNA"/>
</dbReference>
<dbReference type="SMR" id="B1JC07"/>
<dbReference type="STRING" id="390235.PputW619_3601"/>
<dbReference type="KEGG" id="ppw:PputW619_3601"/>
<dbReference type="eggNOG" id="COG3115">
    <property type="taxonomic scope" value="Bacteria"/>
</dbReference>
<dbReference type="HOGENOM" id="CLU_030174_0_1_6"/>
<dbReference type="OrthoDB" id="7054914at2"/>
<dbReference type="GO" id="GO:0032153">
    <property type="term" value="C:cell division site"/>
    <property type="evidence" value="ECO:0007669"/>
    <property type="project" value="UniProtKB-UniRule"/>
</dbReference>
<dbReference type="GO" id="GO:0005886">
    <property type="term" value="C:plasma membrane"/>
    <property type="evidence" value="ECO:0007669"/>
    <property type="project" value="UniProtKB-SubCell"/>
</dbReference>
<dbReference type="GO" id="GO:0000917">
    <property type="term" value="P:division septum assembly"/>
    <property type="evidence" value="ECO:0007669"/>
    <property type="project" value="TreeGrafter"/>
</dbReference>
<dbReference type="GO" id="GO:0043093">
    <property type="term" value="P:FtsZ-dependent cytokinesis"/>
    <property type="evidence" value="ECO:0007669"/>
    <property type="project" value="UniProtKB-UniRule"/>
</dbReference>
<dbReference type="Gene3D" id="3.30.1400.10">
    <property type="entry name" value="ZipA, C-terminal FtsZ-binding domain"/>
    <property type="match status" value="1"/>
</dbReference>
<dbReference type="HAMAP" id="MF_00509">
    <property type="entry name" value="ZipA"/>
    <property type="match status" value="1"/>
</dbReference>
<dbReference type="InterPro" id="IPR011919">
    <property type="entry name" value="Cell_div_ZipA"/>
</dbReference>
<dbReference type="InterPro" id="IPR007449">
    <property type="entry name" value="ZipA_FtsZ-bd_C"/>
</dbReference>
<dbReference type="InterPro" id="IPR036765">
    <property type="entry name" value="ZipA_FtsZ-bd_C_sf"/>
</dbReference>
<dbReference type="NCBIfam" id="TIGR02205">
    <property type="entry name" value="septum_zipA"/>
    <property type="match status" value="1"/>
</dbReference>
<dbReference type="PANTHER" id="PTHR38685">
    <property type="entry name" value="CELL DIVISION PROTEIN ZIPA"/>
    <property type="match status" value="1"/>
</dbReference>
<dbReference type="PANTHER" id="PTHR38685:SF1">
    <property type="entry name" value="CELL DIVISION PROTEIN ZIPA"/>
    <property type="match status" value="1"/>
</dbReference>
<dbReference type="Pfam" id="PF04354">
    <property type="entry name" value="ZipA_C"/>
    <property type="match status" value="1"/>
</dbReference>
<dbReference type="SMART" id="SM00771">
    <property type="entry name" value="ZipA_C"/>
    <property type="match status" value="1"/>
</dbReference>
<dbReference type="SUPFAM" id="SSF64383">
    <property type="entry name" value="Cell-division protein ZipA, C-terminal domain"/>
    <property type="match status" value="1"/>
</dbReference>
<comment type="function">
    <text evidence="1">Essential cell division protein that stabilizes the FtsZ protofilaments by cross-linking them and that serves as a cytoplasmic membrane anchor for the Z ring. Also required for the recruitment to the septal ring of downstream cell division proteins.</text>
</comment>
<comment type="subunit">
    <text evidence="1">Interacts with FtsZ via their C-terminal domains.</text>
</comment>
<comment type="subcellular location">
    <subcellularLocation>
        <location evidence="1">Cell inner membrane</location>
        <topology evidence="1">Single-pass type I membrane protein</topology>
    </subcellularLocation>
    <text evidence="1">Localizes to the Z ring in an FtsZ-dependent manner.</text>
</comment>
<comment type="similarity">
    <text evidence="1">Belongs to the ZipA family.</text>
</comment>
<protein>
    <recommendedName>
        <fullName evidence="1">Cell division protein ZipA</fullName>
    </recommendedName>
</protein>
<gene>
    <name evidence="1" type="primary">zipA</name>
    <name type="ordered locus">PputW619_3601</name>
</gene>
<evidence type="ECO:0000255" key="1">
    <source>
        <dbReference type="HAMAP-Rule" id="MF_00509"/>
    </source>
</evidence>
<evidence type="ECO:0000256" key="2">
    <source>
        <dbReference type="SAM" id="MobiDB-lite"/>
    </source>
</evidence>
<organism>
    <name type="scientific">Pseudomonas putida (strain W619)</name>
    <dbReference type="NCBI Taxonomy" id="390235"/>
    <lineage>
        <taxon>Bacteria</taxon>
        <taxon>Pseudomonadati</taxon>
        <taxon>Pseudomonadota</taxon>
        <taxon>Gammaproteobacteria</taxon>
        <taxon>Pseudomonadales</taxon>
        <taxon>Pseudomonadaceae</taxon>
        <taxon>Pseudomonas</taxon>
    </lineage>
</organism>
<sequence length="294" mass="32707">MEIGLREWLILIGIIVIAGILFDGWRRMRGGKGKLKFRLDRSYSNLPDEEGSAEVLGPSRVLDTQKEPELDESDLPSLSAPAREREREQKPAKATKRGKRAAEMQPQGDLDLVAEPREPDLFADADDDFAGDNNRNSGFAAAGSAAKELPPVEEVLVISVISRDEGGFKGPALLQNILESGLRFGEMDIFHRHESMAGHGEVLFSMANAVKPGIFDLDDIDHFSTRAVSFFLGLPGPRHPKQAFDVMVAAARKLAHELNGELKDDQRSVLTAQTIEHYRQRIVEFERRALTQKR</sequence>
<keyword id="KW-0131">Cell cycle</keyword>
<keyword id="KW-0132">Cell division</keyword>
<keyword id="KW-0997">Cell inner membrane</keyword>
<keyword id="KW-1003">Cell membrane</keyword>
<keyword id="KW-0472">Membrane</keyword>
<keyword id="KW-0812">Transmembrane</keyword>
<keyword id="KW-1133">Transmembrane helix</keyword>
<proteinExistence type="inferred from homology"/>
<name>ZIPA_PSEPW</name>
<accession>B1JC07</accession>
<feature type="chain" id="PRO_1000127223" description="Cell division protein ZipA">
    <location>
        <begin position="1"/>
        <end position="294"/>
    </location>
</feature>
<feature type="topological domain" description="Periplasmic" evidence="1">
    <location>
        <position position="1"/>
    </location>
</feature>
<feature type="transmembrane region" description="Helical" evidence="1">
    <location>
        <begin position="2"/>
        <end position="22"/>
    </location>
</feature>
<feature type="topological domain" description="Cytoplasmic" evidence="1">
    <location>
        <begin position="23"/>
        <end position="294"/>
    </location>
</feature>
<feature type="region of interest" description="Disordered" evidence="2">
    <location>
        <begin position="47"/>
        <end position="107"/>
    </location>
</feature>
<feature type="compositionally biased region" description="Basic and acidic residues" evidence="2">
    <location>
        <begin position="82"/>
        <end position="91"/>
    </location>
</feature>